<dbReference type="EMBL" id="CR382129">
    <property type="protein sequence ID" value="CAG82519.1"/>
    <property type="molecule type" value="Genomic_DNA"/>
</dbReference>
<dbReference type="RefSeq" id="XP_502197.1">
    <property type="nucleotide sequence ID" value="XM_502197.1"/>
</dbReference>
<dbReference type="FunCoup" id="Q6CAW5">
    <property type="interactions" value="609"/>
</dbReference>
<dbReference type="STRING" id="284591.Q6CAW5"/>
<dbReference type="EnsemblFungi" id="CAG82519">
    <property type="protein sequence ID" value="CAG82519"/>
    <property type="gene ID" value="YALI0_C23815g"/>
</dbReference>
<dbReference type="KEGG" id="yli:2909597"/>
<dbReference type="VEuPathDB" id="FungiDB:YALI0_C23815g"/>
<dbReference type="HOGENOM" id="CLU_049109_4_2_1"/>
<dbReference type="InParanoid" id="Q6CAW5"/>
<dbReference type="OMA" id="FTMTLME"/>
<dbReference type="OrthoDB" id="102444at4891"/>
<dbReference type="Proteomes" id="UP000001300">
    <property type="component" value="Chromosome C"/>
</dbReference>
<dbReference type="GO" id="GO:0005737">
    <property type="term" value="C:cytoplasm"/>
    <property type="evidence" value="ECO:0000318"/>
    <property type="project" value="GO_Central"/>
</dbReference>
<dbReference type="GO" id="GO:0005743">
    <property type="term" value="C:mitochondrial inner membrane"/>
    <property type="evidence" value="ECO:0007669"/>
    <property type="project" value="UniProtKB-SubCell"/>
</dbReference>
<dbReference type="GO" id="GO:0005739">
    <property type="term" value="C:mitochondrion"/>
    <property type="evidence" value="ECO:0000318"/>
    <property type="project" value="GO_Central"/>
</dbReference>
<dbReference type="GO" id="GO:0006067">
    <property type="term" value="P:ethanol metabolic process"/>
    <property type="evidence" value="ECO:0007669"/>
    <property type="project" value="EnsemblFungi"/>
</dbReference>
<dbReference type="InterPro" id="IPR007248">
    <property type="entry name" value="Mpv17_PMP22"/>
</dbReference>
<dbReference type="PANTHER" id="PTHR11266">
    <property type="entry name" value="PEROXISOMAL MEMBRANE PROTEIN 2, PXMP2 MPV17"/>
    <property type="match status" value="1"/>
</dbReference>
<dbReference type="PANTHER" id="PTHR11266:SF17">
    <property type="entry name" value="PROTEIN MPV17"/>
    <property type="match status" value="1"/>
</dbReference>
<dbReference type="Pfam" id="PF04117">
    <property type="entry name" value="Mpv17_PMP22"/>
    <property type="match status" value="1"/>
</dbReference>
<organism>
    <name type="scientific">Yarrowia lipolytica (strain CLIB 122 / E 150)</name>
    <name type="common">Yeast</name>
    <name type="synonym">Candida lipolytica</name>
    <dbReference type="NCBI Taxonomy" id="284591"/>
    <lineage>
        <taxon>Eukaryota</taxon>
        <taxon>Fungi</taxon>
        <taxon>Dikarya</taxon>
        <taxon>Ascomycota</taxon>
        <taxon>Saccharomycotina</taxon>
        <taxon>Dipodascomycetes</taxon>
        <taxon>Dipodascales</taxon>
        <taxon>Dipodascales incertae sedis</taxon>
        <taxon>Yarrowia</taxon>
    </lineage>
</organism>
<name>SYM1_YARLI</name>
<gene>
    <name type="primary">SYM1</name>
    <name type="ordered locus">YALI0C23815g</name>
</gene>
<feature type="chain" id="PRO_0000234416" description="Protein SYM1">
    <location>
        <begin position="1"/>
        <end position="202"/>
    </location>
</feature>
<feature type="transmembrane region" description="Helical" evidence="2">
    <location>
        <begin position="15"/>
        <end position="31"/>
    </location>
</feature>
<feature type="transmembrane region" description="Helical" evidence="2">
    <location>
        <begin position="48"/>
        <end position="66"/>
    </location>
</feature>
<feature type="transmembrane region" description="Helical" evidence="2">
    <location>
        <begin position="82"/>
        <end position="99"/>
    </location>
</feature>
<feature type="transmembrane region" description="Helical" evidence="2">
    <location>
        <begin position="143"/>
        <end position="159"/>
    </location>
</feature>
<accession>Q6CAW5</accession>
<proteinExistence type="inferred from homology"/>
<keyword id="KW-0472">Membrane</keyword>
<keyword id="KW-0496">Mitochondrion</keyword>
<keyword id="KW-0999">Mitochondrion inner membrane</keyword>
<keyword id="KW-1185">Reference proteome</keyword>
<keyword id="KW-0812">Transmembrane</keyword>
<keyword id="KW-1133">Transmembrane helix</keyword>
<reference key="1">
    <citation type="journal article" date="2004" name="Nature">
        <title>Genome evolution in yeasts.</title>
        <authorList>
            <person name="Dujon B."/>
            <person name="Sherman D."/>
            <person name="Fischer G."/>
            <person name="Durrens P."/>
            <person name="Casaregola S."/>
            <person name="Lafontaine I."/>
            <person name="de Montigny J."/>
            <person name="Marck C."/>
            <person name="Neuveglise C."/>
            <person name="Talla E."/>
            <person name="Goffard N."/>
            <person name="Frangeul L."/>
            <person name="Aigle M."/>
            <person name="Anthouard V."/>
            <person name="Babour A."/>
            <person name="Barbe V."/>
            <person name="Barnay S."/>
            <person name="Blanchin S."/>
            <person name="Beckerich J.-M."/>
            <person name="Beyne E."/>
            <person name="Bleykasten C."/>
            <person name="Boisrame A."/>
            <person name="Boyer J."/>
            <person name="Cattolico L."/>
            <person name="Confanioleri F."/>
            <person name="de Daruvar A."/>
            <person name="Despons L."/>
            <person name="Fabre E."/>
            <person name="Fairhead C."/>
            <person name="Ferry-Dumazet H."/>
            <person name="Groppi A."/>
            <person name="Hantraye F."/>
            <person name="Hennequin C."/>
            <person name="Jauniaux N."/>
            <person name="Joyet P."/>
            <person name="Kachouri R."/>
            <person name="Kerrest A."/>
            <person name="Koszul R."/>
            <person name="Lemaire M."/>
            <person name="Lesur I."/>
            <person name="Ma L."/>
            <person name="Muller H."/>
            <person name="Nicaud J.-M."/>
            <person name="Nikolski M."/>
            <person name="Oztas S."/>
            <person name="Ozier-Kalogeropoulos O."/>
            <person name="Pellenz S."/>
            <person name="Potier S."/>
            <person name="Richard G.-F."/>
            <person name="Straub M.-L."/>
            <person name="Suleau A."/>
            <person name="Swennen D."/>
            <person name="Tekaia F."/>
            <person name="Wesolowski-Louvel M."/>
            <person name="Westhof E."/>
            <person name="Wirth B."/>
            <person name="Zeniou-Meyer M."/>
            <person name="Zivanovic Y."/>
            <person name="Bolotin-Fukuhara M."/>
            <person name="Thierry A."/>
            <person name="Bouchier C."/>
            <person name="Caudron B."/>
            <person name="Scarpelli C."/>
            <person name="Gaillardin C."/>
            <person name="Weissenbach J."/>
            <person name="Wincker P."/>
            <person name="Souciet J.-L."/>
        </authorList>
    </citation>
    <scope>NUCLEOTIDE SEQUENCE [LARGE SCALE GENOMIC DNA]</scope>
    <source>
        <strain>CLIB 122 / E 150</strain>
    </source>
</reference>
<comment type="function">
    <text evidence="1">May be involved in cellular response to stress. Required to maintain mitochondrial DNA (mtDNA) integrity and stability (By similarity).</text>
</comment>
<comment type="subcellular location">
    <subcellularLocation>
        <location evidence="1">Mitochondrion inner membrane</location>
        <topology evidence="1">Multi-pass membrane protein</topology>
    </subcellularLocation>
</comment>
<comment type="similarity">
    <text evidence="3">Belongs to the peroxisomal membrane protein PXMP2/4 family.</text>
</comment>
<sequence>MNWYVRLLQKYPYRMAVTSTSSLFMIGDCVSQRYFSDKPYEPMRTARAGIYACAFAPAMTAWFRFLGQQQLPVIAKVAIDQAVFAPSSIGYYFSVMGLLEGKSPDTIWQSLKNQYWDTLKCGWMIWPAFQLFNFGIVPPNFRVLASNCCGLVWNTFLAYQNANKMEKGHVADLVIEEVKEEVKEVKQEVLAEVKVIKGFVKQ</sequence>
<evidence type="ECO:0000250" key="1"/>
<evidence type="ECO:0000255" key="2"/>
<evidence type="ECO:0000305" key="3"/>
<protein>
    <recommendedName>
        <fullName>Protein SYM1</fullName>
    </recommendedName>
</protein>